<keyword id="KW-0378">Hydrolase</keyword>
<keyword id="KW-0479">Metal-binding</keyword>
<keyword id="KW-1185">Reference proteome</keyword>
<protein>
    <recommendedName>
        <fullName evidence="1">D-phenylhydantoinase</fullName>
        <ecNumber evidence="1">3.5.2.-</ecNumber>
    </recommendedName>
    <alternativeName>
        <fullName evidence="1">Hydantoin-utilizing enzyme HyuA</fullName>
    </alternativeName>
</protein>
<name>PHYDA_ECOK1</name>
<reference key="1">
    <citation type="journal article" date="2007" name="J. Bacteriol.">
        <title>The genome sequence of avian pathogenic Escherichia coli strain O1:K1:H7 shares strong similarities with human extraintestinal pathogenic E. coli genomes.</title>
        <authorList>
            <person name="Johnson T.J."/>
            <person name="Kariyawasam S."/>
            <person name="Wannemuehler Y."/>
            <person name="Mangiamele P."/>
            <person name="Johnson S.J."/>
            <person name="Doetkott C."/>
            <person name="Skyberg J.A."/>
            <person name="Lynne A.M."/>
            <person name="Johnson J.R."/>
            <person name="Nolan L.K."/>
        </authorList>
    </citation>
    <scope>NUCLEOTIDE SEQUENCE [LARGE SCALE GENOMIC DNA]</scope>
</reference>
<organism>
    <name type="scientific">Escherichia coli O1:K1 / APEC</name>
    <dbReference type="NCBI Taxonomy" id="405955"/>
    <lineage>
        <taxon>Bacteria</taxon>
        <taxon>Pseudomonadati</taxon>
        <taxon>Pseudomonadota</taxon>
        <taxon>Gammaproteobacteria</taxon>
        <taxon>Enterobacterales</taxon>
        <taxon>Enterobacteriaceae</taxon>
        <taxon>Escherichia</taxon>
    </lineage>
</organism>
<gene>
    <name evidence="1" type="primary">hyuA</name>
    <name type="synonym">ygeZ</name>
    <name type="ordered locus">Ecok1_28100</name>
    <name type="ORF">APECO1_3653</name>
</gene>
<proteinExistence type="inferred from homology"/>
<accession>A1AF64</accession>
<feature type="chain" id="PRO_0000317652" description="D-phenylhydantoinase">
    <location>
        <begin position="1"/>
        <end position="461"/>
    </location>
</feature>
<feature type="binding site" evidence="1">
    <location>
        <position position="59"/>
    </location>
    <ligand>
        <name>a divalent metal cation</name>
        <dbReference type="ChEBI" id="CHEBI:60240"/>
        <label>1</label>
    </ligand>
</feature>
<feature type="binding site" evidence="1">
    <location>
        <position position="61"/>
    </location>
    <ligand>
        <name>a divalent metal cation</name>
        <dbReference type="ChEBI" id="CHEBI:60240"/>
        <label>1</label>
    </ligand>
</feature>
<feature type="binding site" description="via carbamate group" evidence="1">
    <location>
        <position position="151"/>
    </location>
    <ligand>
        <name>a divalent metal cation</name>
        <dbReference type="ChEBI" id="CHEBI:60240"/>
        <label>1</label>
    </ligand>
</feature>
<feature type="binding site" description="via carbamate group" evidence="1">
    <location>
        <position position="151"/>
    </location>
    <ligand>
        <name>a divalent metal cation</name>
        <dbReference type="ChEBI" id="CHEBI:60240"/>
        <label>2</label>
    </ligand>
</feature>
<feature type="binding site" evidence="1">
    <location>
        <position position="156"/>
    </location>
    <ligand>
        <name>substrate</name>
    </ligand>
</feature>
<feature type="binding site" evidence="1">
    <location>
        <position position="182"/>
    </location>
    <ligand>
        <name>a divalent metal cation</name>
        <dbReference type="ChEBI" id="CHEBI:60240"/>
        <label>2</label>
    </ligand>
</feature>
<feature type="binding site" evidence="1">
    <location>
        <position position="239"/>
    </location>
    <ligand>
        <name>a divalent metal cation</name>
        <dbReference type="ChEBI" id="CHEBI:60240"/>
        <label>2</label>
    </ligand>
</feature>
<feature type="binding site" evidence="1">
    <location>
        <position position="286"/>
    </location>
    <ligand>
        <name>substrate</name>
    </ligand>
</feature>
<feature type="binding site" evidence="1">
    <location>
        <position position="313"/>
    </location>
    <ligand>
        <name>a divalent metal cation</name>
        <dbReference type="ChEBI" id="CHEBI:60240"/>
        <label>1</label>
    </ligand>
</feature>
<feature type="binding site" evidence="1">
    <location>
        <position position="335"/>
    </location>
    <ligand>
        <name>substrate</name>
    </ligand>
</feature>
<feature type="modified residue" description="N6-carboxylysine" evidence="1">
    <location>
        <position position="151"/>
    </location>
</feature>
<comment type="function">
    <text evidence="1">Catalyzes the stereospecific hydrolysis of the cyclic amide bond of D-hydantoin derivatives with an aromatic side chains at the 5'-position. Has no activity on dihydropyrimidines. The physiological function is unknown.</text>
</comment>
<comment type="catalytic activity">
    <reaction evidence="1">
        <text>D-5-phenylhydantoin + H2O = N-carbamoyl-D-phenylglycine + H(+)</text>
        <dbReference type="Rhea" id="RHEA:51664"/>
        <dbReference type="ChEBI" id="CHEBI:15377"/>
        <dbReference type="ChEBI" id="CHEBI:15378"/>
        <dbReference type="ChEBI" id="CHEBI:140750"/>
        <dbReference type="ChEBI" id="CHEBI:140758"/>
    </reaction>
</comment>
<comment type="cofactor">
    <cofactor evidence="1">
        <name>a divalent metal cation</name>
        <dbReference type="ChEBI" id="CHEBI:60240"/>
    </cofactor>
    <text evidence="1">Binds 2 divalent metal cations per subunit.</text>
</comment>
<comment type="subunit">
    <text evidence="1">Homotetramer.</text>
</comment>
<comment type="PTM">
    <text evidence="1">Carboxylation allows a single lysine to coordinate two divalent metal cations.</text>
</comment>
<comment type="similarity">
    <text evidence="1">Belongs to the metallo-dependent hydrolases superfamily. Hydantoinase/dihydropyrimidinase family.</text>
</comment>
<evidence type="ECO:0000255" key="1">
    <source>
        <dbReference type="HAMAP-Rule" id="MF_01644"/>
    </source>
</evidence>
<dbReference type="EC" id="3.5.2.-" evidence="1"/>
<dbReference type="EMBL" id="CP000468">
    <property type="protein sequence ID" value="ABJ02304.1"/>
    <property type="molecule type" value="Genomic_DNA"/>
</dbReference>
<dbReference type="RefSeq" id="WP_001264431.1">
    <property type="nucleotide sequence ID" value="NZ_CADILS010000010.1"/>
</dbReference>
<dbReference type="SMR" id="A1AF64"/>
<dbReference type="KEGG" id="ecv:APECO1_3653"/>
<dbReference type="HOGENOM" id="CLU_015572_2_0_6"/>
<dbReference type="Proteomes" id="UP000008216">
    <property type="component" value="Chromosome"/>
</dbReference>
<dbReference type="GO" id="GO:0005829">
    <property type="term" value="C:cytosol"/>
    <property type="evidence" value="ECO:0007669"/>
    <property type="project" value="TreeGrafter"/>
</dbReference>
<dbReference type="GO" id="GO:0016812">
    <property type="term" value="F:hydrolase activity, acting on carbon-nitrogen (but not peptide) bonds, in cyclic amides"/>
    <property type="evidence" value="ECO:0007669"/>
    <property type="project" value="UniProtKB-UniRule"/>
</dbReference>
<dbReference type="GO" id="GO:0046872">
    <property type="term" value="F:metal ion binding"/>
    <property type="evidence" value="ECO:0007669"/>
    <property type="project" value="UniProtKB-KW"/>
</dbReference>
<dbReference type="GO" id="GO:0006208">
    <property type="term" value="P:pyrimidine nucleobase catabolic process"/>
    <property type="evidence" value="ECO:0007669"/>
    <property type="project" value="InterPro"/>
</dbReference>
<dbReference type="CDD" id="cd01314">
    <property type="entry name" value="D-HYD"/>
    <property type="match status" value="1"/>
</dbReference>
<dbReference type="FunFam" id="3.20.20.140:FF:000026">
    <property type="entry name" value="D-phenylhydantoinase"/>
    <property type="match status" value="1"/>
</dbReference>
<dbReference type="Gene3D" id="3.20.20.140">
    <property type="entry name" value="Metal-dependent hydrolases"/>
    <property type="match status" value="1"/>
</dbReference>
<dbReference type="Gene3D" id="2.30.40.10">
    <property type="entry name" value="Urease, subunit C, domain 1"/>
    <property type="match status" value="1"/>
</dbReference>
<dbReference type="HAMAP" id="MF_01644">
    <property type="entry name" value="D_hydantoinase"/>
    <property type="match status" value="1"/>
</dbReference>
<dbReference type="InterPro" id="IPR006680">
    <property type="entry name" value="Amidohydro-rel"/>
</dbReference>
<dbReference type="InterPro" id="IPR023766">
    <property type="entry name" value="D_phenylhydantoinase"/>
</dbReference>
<dbReference type="InterPro" id="IPR011778">
    <property type="entry name" value="Hydantoinase/dihydroPyrase"/>
</dbReference>
<dbReference type="InterPro" id="IPR011059">
    <property type="entry name" value="Metal-dep_hydrolase_composite"/>
</dbReference>
<dbReference type="InterPro" id="IPR032466">
    <property type="entry name" value="Metal_Hydrolase"/>
</dbReference>
<dbReference type="InterPro" id="IPR050378">
    <property type="entry name" value="Metallo-dep_Hydrolases_sf"/>
</dbReference>
<dbReference type="NCBIfam" id="TIGR02033">
    <property type="entry name" value="D-hydantoinase"/>
    <property type="match status" value="1"/>
</dbReference>
<dbReference type="PANTHER" id="PTHR11647:SF1">
    <property type="entry name" value="COLLAPSIN RESPONSE MEDIATOR PROTEIN"/>
    <property type="match status" value="1"/>
</dbReference>
<dbReference type="PANTHER" id="PTHR11647">
    <property type="entry name" value="HYDRANTOINASE/DIHYDROPYRIMIDINASE FAMILY MEMBER"/>
    <property type="match status" value="1"/>
</dbReference>
<dbReference type="Pfam" id="PF01979">
    <property type="entry name" value="Amidohydro_1"/>
    <property type="match status" value="1"/>
</dbReference>
<dbReference type="SUPFAM" id="SSF51338">
    <property type="entry name" value="Composite domain of metallo-dependent hydrolases"/>
    <property type="match status" value="2"/>
</dbReference>
<dbReference type="SUPFAM" id="SSF51556">
    <property type="entry name" value="Metallo-dependent hydrolases"/>
    <property type="match status" value="1"/>
</dbReference>
<sequence>MRVLIKNGIVVNADGQAKQDLLIESGIVRQLGTDISPQLPCEEIDASGCYVFPGGVDVHTHFNIDVGIARSCDDFFTGTRAAACGGTTTIIDHMGFGPNGCRLRHQLEVYRGYAAHKAVIDYSFHGVIQHINHAILDEIPMMVEEGLSSFKLYLTYQYKLNDDEVLQALRRLHESGALTTVHPENDAAIASKRAEFIAAGLTAPRYHALSRPLECEAEAIARMINLAQIAGNAPLYIVHLSNGLGLDYLRLARANHQPVWVETCPQYLLLDERSYDTEDGMKFILSPPLRNVREQDKLWCGISDGAIDVVATDHCTFSMAQRLQISKGDFSRCPNGLPGVENRMQLLFSSGVMTGRISLERFVELTSAMPARLFGLWPQKGILAPGSDGDVVIIDPRQSQQIQHRHLHDNADYSPWEGFTCQGAIVRTLSRGETIFCDGTFTGKAGRGRFLRRKPFVPPVL</sequence>